<dbReference type="EC" id="6.1.1.20" evidence="1"/>
<dbReference type="EMBL" id="CP001657">
    <property type="protein sequence ID" value="ACT12933.1"/>
    <property type="molecule type" value="Genomic_DNA"/>
</dbReference>
<dbReference type="RefSeq" id="WP_015840133.1">
    <property type="nucleotide sequence ID" value="NC_012917.1"/>
</dbReference>
<dbReference type="SMR" id="C6DFZ0"/>
<dbReference type="STRING" id="561230.PC1_1892"/>
<dbReference type="KEGG" id="pct:PC1_1892"/>
<dbReference type="eggNOG" id="COG0016">
    <property type="taxonomic scope" value="Bacteria"/>
</dbReference>
<dbReference type="HOGENOM" id="CLU_025086_0_1_6"/>
<dbReference type="OrthoDB" id="9800719at2"/>
<dbReference type="Proteomes" id="UP000002736">
    <property type="component" value="Chromosome"/>
</dbReference>
<dbReference type="GO" id="GO:0005737">
    <property type="term" value="C:cytoplasm"/>
    <property type="evidence" value="ECO:0007669"/>
    <property type="project" value="UniProtKB-SubCell"/>
</dbReference>
<dbReference type="GO" id="GO:0005524">
    <property type="term" value="F:ATP binding"/>
    <property type="evidence" value="ECO:0007669"/>
    <property type="project" value="UniProtKB-UniRule"/>
</dbReference>
<dbReference type="GO" id="GO:0000287">
    <property type="term" value="F:magnesium ion binding"/>
    <property type="evidence" value="ECO:0007669"/>
    <property type="project" value="UniProtKB-UniRule"/>
</dbReference>
<dbReference type="GO" id="GO:0004826">
    <property type="term" value="F:phenylalanine-tRNA ligase activity"/>
    <property type="evidence" value="ECO:0007669"/>
    <property type="project" value="UniProtKB-UniRule"/>
</dbReference>
<dbReference type="GO" id="GO:0000049">
    <property type="term" value="F:tRNA binding"/>
    <property type="evidence" value="ECO:0007669"/>
    <property type="project" value="InterPro"/>
</dbReference>
<dbReference type="GO" id="GO:0006432">
    <property type="term" value="P:phenylalanyl-tRNA aminoacylation"/>
    <property type="evidence" value="ECO:0007669"/>
    <property type="project" value="UniProtKB-UniRule"/>
</dbReference>
<dbReference type="CDD" id="cd00496">
    <property type="entry name" value="PheRS_alpha_core"/>
    <property type="match status" value="1"/>
</dbReference>
<dbReference type="FunFam" id="3.30.930.10:FF:000003">
    <property type="entry name" value="Phenylalanine--tRNA ligase alpha subunit"/>
    <property type="match status" value="1"/>
</dbReference>
<dbReference type="Gene3D" id="3.30.930.10">
    <property type="entry name" value="Bira Bifunctional Protein, Domain 2"/>
    <property type="match status" value="1"/>
</dbReference>
<dbReference type="HAMAP" id="MF_00281">
    <property type="entry name" value="Phe_tRNA_synth_alpha1"/>
    <property type="match status" value="1"/>
</dbReference>
<dbReference type="InterPro" id="IPR006195">
    <property type="entry name" value="aa-tRNA-synth_II"/>
</dbReference>
<dbReference type="InterPro" id="IPR045864">
    <property type="entry name" value="aa-tRNA-synth_II/BPL/LPL"/>
</dbReference>
<dbReference type="InterPro" id="IPR004529">
    <property type="entry name" value="Phe-tRNA-synth_IIc_asu"/>
</dbReference>
<dbReference type="InterPro" id="IPR004188">
    <property type="entry name" value="Phe-tRNA_ligase_II_N"/>
</dbReference>
<dbReference type="InterPro" id="IPR022911">
    <property type="entry name" value="Phe_tRNA_ligase_alpha1_bac"/>
</dbReference>
<dbReference type="InterPro" id="IPR002319">
    <property type="entry name" value="Phenylalanyl-tRNA_Synthase"/>
</dbReference>
<dbReference type="InterPro" id="IPR010978">
    <property type="entry name" value="tRNA-bd_arm"/>
</dbReference>
<dbReference type="NCBIfam" id="TIGR00468">
    <property type="entry name" value="pheS"/>
    <property type="match status" value="1"/>
</dbReference>
<dbReference type="PANTHER" id="PTHR11538:SF41">
    <property type="entry name" value="PHENYLALANINE--TRNA LIGASE, MITOCHONDRIAL"/>
    <property type="match status" value="1"/>
</dbReference>
<dbReference type="PANTHER" id="PTHR11538">
    <property type="entry name" value="PHENYLALANYL-TRNA SYNTHETASE"/>
    <property type="match status" value="1"/>
</dbReference>
<dbReference type="Pfam" id="PF02912">
    <property type="entry name" value="Phe_tRNA-synt_N"/>
    <property type="match status" value="1"/>
</dbReference>
<dbReference type="Pfam" id="PF01409">
    <property type="entry name" value="tRNA-synt_2d"/>
    <property type="match status" value="1"/>
</dbReference>
<dbReference type="SUPFAM" id="SSF55681">
    <property type="entry name" value="Class II aaRS and biotin synthetases"/>
    <property type="match status" value="1"/>
</dbReference>
<dbReference type="SUPFAM" id="SSF46589">
    <property type="entry name" value="tRNA-binding arm"/>
    <property type="match status" value="1"/>
</dbReference>
<dbReference type="PROSITE" id="PS50862">
    <property type="entry name" value="AA_TRNA_LIGASE_II"/>
    <property type="match status" value="1"/>
</dbReference>
<name>SYFA_PECCP</name>
<gene>
    <name evidence="1" type="primary">pheS</name>
    <name type="ordered locus">PC1_1892</name>
</gene>
<comment type="catalytic activity">
    <reaction evidence="1">
        <text>tRNA(Phe) + L-phenylalanine + ATP = L-phenylalanyl-tRNA(Phe) + AMP + diphosphate + H(+)</text>
        <dbReference type="Rhea" id="RHEA:19413"/>
        <dbReference type="Rhea" id="RHEA-COMP:9668"/>
        <dbReference type="Rhea" id="RHEA-COMP:9699"/>
        <dbReference type="ChEBI" id="CHEBI:15378"/>
        <dbReference type="ChEBI" id="CHEBI:30616"/>
        <dbReference type="ChEBI" id="CHEBI:33019"/>
        <dbReference type="ChEBI" id="CHEBI:58095"/>
        <dbReference type="ChEBI" id="CHEBI:78442"/>
        <dbReference type="ChEBI" id="CHEBI:78531"/>
        <dbReference type="ChEBI" id="CHEBI:456215"/>
        <dbReference type="EC" id="6.1.1.20"/>
    </reaction>
</comment>
<comment type="cofactor">
    <cofactor evidence="1">
        <name>Mg(2+)</name>
        <dbReference type="ChEBI" id="CHEBI:18420"/>
    </cofactor>
    <text evidence="1">Binds 2 magnesium ions per tetramer.</text>
</comment>
<comment type="subunit">
    <text evidence="1">Tetramer of two alpha and two beta subunits.</text>
</comment>
<comment type="subcellular location">
    <subcellularLocation>
        <location evidence="1">Cytoplasm</location>
    </subcellularLocation>
</comment>
<comment type="similarity">
    <text evidence="1">Belongs to the class-II aminoacyl-tRNA synthetase family. Phe-tRNA synthetase alpha subunit type 1 subfamily.</text>
</comment>
<keyword id="KW-0030">Aminoacyl-tRNA synthetase</keyword>
<keyword id="KW-0067">ATP-binding</keyword>
<keyword id="KW-0963">Cytoplasm</keyword>
<keyword id="KW-0436">Ligase</keyword>
<keyword id="KW-0460">Magnesium</keyword>
<keyword id="KW-0479">Metal-binding</keyword>
<keyword id="KW-0547">Nucleotide-binding</keyword>
<keyword id="KW-0648">Protein biosynthesis</keyword>
<reference key="1">
    <citation type="submission" date="2009-07" db="EMBL/GenBank/DDBJ databases">
        <title>Complete sequence of Pectobacterium carotovorum subsp. carotovorum PC1.</title>
        <authorList>
            <consortium name="US DOE Joint Genome Institute"/>
            <person name="Lucas S."/>
            <person name="Copeland A."/>
            <person name="Lapidus A."/>
            <person name="Glavina del Rio T."/>
            <person name="Tice H."/>
            <person name="Bruce D."/>
            <person name="Goodwin L."/>
            <person name="Pitluck S."/>
            <person name="Munk A.C."/>
            <person name="Brettin T."/>
            <person name="Detter J.C."/>
            <person name="Han C."/>
            <person name="Tapia R."/>
            <person name="Larimer F."/>
            <person name="Land M."/>
            <person name="Hauser L."/>
            <person name="Kyrpides N."/>
            <person name="Mikhailova N."/>
            <person name="Balakrishnan V."/>
            <person name="Glasner J."/>
            <person name="Perna N.T."/>
        </authorList>
    </citation>
    <scope>NUCLEOTIDE SEQUENCE [LARGE SCALE GENOMIC DNA]</scope>
    <source>
        <strain>PC1</strain>
    </source>
</reference>
<proteinExistence type="inferred from homology"/>
<accession>C6DFZ0</accession>
<feature type="chain" id="PRO_1000204832" description="Phenylalanine--tRNA ligase alpha subunit">
    <location>
        <begin position="1"/>
        <end position="327"/>
    </location>
</feature>
<feature type="binding site" evidence="1">
    <location>
        <position position="252"/>
    </location>
    <ligand>
        <name>Mg(2+)</name>
        <dbReference type="ChEBI" id="CHEBI:18420"/>
        <note>shared with beta subunit</note>
    </ligand>
</feature>
<evidence type="ECO:0000255" key="1">
    <source>
        <dbReference type="HAMAP-Rule" id="MF_00281"/>
    </source>
</evidence>
<protein>
    <recommendedName>
        <fullName evidence="1">Phenylalanine--tRNA ligase alpha subunit</fullName>
        <ecNumber evidence="1">6.1.1.20</ecNumber>
    </recommendedName>
    <alternativeName>
        <fullName evidence="1">Phenylalanyl-tRNA synthetase alpha subunit</fullName>
        <shortName evidence="1">PheRS</shortName>
    </alternativeName>
</protein>
<sequence length="327" mass="37123">MPHLAELVAKARTAIEEAQDVAALENVRVEYLGKKGHLTLQMTSLRELPAEERPAAGAVINQAKQDVQDALNARKHTLESAELNARLAQETIDVSLPGRTIENGGLHPVTRTIDRIETFFGELGFSVVTGPEIEDDYHNFDALNIPGHHPARADHDTFWFDATRLLRTQTSGVQIRTMEKQQPPIRIIAPGRVYRNDYDQTHTPMFHQMEGLIVDKDISFTNLKGTLHDFLRNFFEEDLQVRFRPSYFPFTEPSAEVDVMGKNGKWLEVLGCGMVHPNVLRNVGIDPEVYSGFAFGMGMERLTMLRYGVTDLRAFFENDLRFLKQFK</sequence>
<organism>
    <name type="scientific">Pectobacterium carotovorum subsp. carotovorum (strain PC1)</name>
    <dbReference type="NCBI Taxonomy" id="561230"/>
    <lineage>
        <taxon>Bacteria</taxon>
        <taxon>Pseudomonadati</taxon>
        <taxon>Pseudomonadota</taxon>
        <taxon>Gammaproteobacteria</taxon>
        <taxon>Enterobacterales</taxon>
        <taxon>Pectobacteriaceae</taxon>
        <taxon>Pectobacterium</taxon>
    </lineage>
</organism>